<accession>A2ZAX5</accession>
<protein>
    <recommendedName>
        <fullName>Protein SCARECROW 1</fullName>
    </recommendedName>
    <alternativeName>
        <fullName>OsSCR1</fullName>
    </alternativeName>
</protein>
<name>SCR1_ORYSI</name>
<sequence length="659" mass="70501">MGSSSLLLFPSSSSSATHSSYSPSSSSHAITSLLPPLPSDHHLLLYLDHQEQHHLAAAMVRKRPASDMDLPPPRRHVTGDLSDVTAAAAPSSASAQLPALPTQLPAFHHTDMDLAAPAPPPPQQQVAAGEGGPPSTAWVDGIIRDIIASSGAAVSVAQLIHNVREIIRPCNPDLASILELRLRSLLTSDPAPPPPPPPSHPALLPPDATAPPPPPTSVAALPPPPPPQPDKRRREPQCQEQEPNQPQSPKPPTAEETAAAAAAAAAAALAAAKERKEEQRRKQRDEEGLHLLTLLLQCAESVNADNLDEAHRALLEIAELATPFGTSTQRVAAYFAEAMSARLVSSCLGLYAPLPNPSPAAARLHGRVAAAFQVFNGISPFVKFSHFTANQAIQEAFEREERVHIIDLDIMQGLQWPGLFHILASRPGGPPRVRLTGLGASMEALEATGKRLSDFADTLGLPFEFCPVADKAGNLDPEKLGVTRREAVAVHWLRHSLYDVTGSDSNTLWLIQRLAPKVVTMVEQDLSHSGSFLARFVEAIHYYSALFDSLDASYSEDSPERHVVEQQLLSREIRNVLAVGGPARTGDVKFGSWREKLAQSGFRVSSLAGSAAAQAALLLGMFPSDGYTLIEENGALKLGWKDLCLLTASAWRPIQASGR</sequence>
<proteinExistence type="inferred from homology"/>
<evidence type="ECO:0000250" key="1"/>
<evidence type="ECO:0000255" key="2"/>
<evidence type="ECO:0000255" key="3">
    <source>
        <dbReference type="PROSITE-ProRule" id="PRU01191"/>
    </source>
</evidence>
<evidence type="ECO:0000256" key="4">
    <source>
        <dbReference type="SAM" id="MobiDB-lite"/>
    </source>
</evidence>
<evidence type="ECO:0000305" key="5"/>
<organism>
    <name type="scientific">Oryza sativa subsp. indica</name>
    <name type="common">Rice</name>
    <dbReference type="NCBI Taxonomy" id="39946"/>
    <lineage>
        <taxon>Eukaryota</taxon>
        <taxon>Viridiplantae</taxon>
        <taxon>Streptophyta</taxon>
        <taxon>Embryophyta</taxon>
        <taxon>Tracheophyta</taxon>
        <taxon>Spermatophyta</taxon>
        <taxon>Magnoliopsida</taxon>
        <taxon>Liliopsida</taxon>
        <taxon>Poales</taxon>
        <taxon>Poaceae</taxon>
        <taxon>BOP clade</taxon>
        <taxon>Oryzoideae</taxon>
        <taxon>Oryzeae</taxon>
        <taxon>Oryzinae</taxon>
        <taxon>Oryza</taxon>
        <taxon>Oryza sativa</taxon>
    </lineage>
</organism>
<feature type="chain" id="PRO_0000329418" description="Protein SCARECROW 1">
    <location>
        <begin position="1"/>
        <end position="659"/>
    </location>
</feature>
<feature type="domain" description="GRAS" evidence="3">
    <location>
        <begin position="282"/>
        <end position="652"/>
    </location>
</feature>
<feature type="region of interest" description="Disordered" evidence="4">
    <location>
        <begin position="1"/>
        <end position="33"/>
    </location>
</feature>
<feature type="region of interest" description="Disordered" evidence="4">
    <location>
        <begin position="188"/>
        <end position="285"/>
    </location>
</feature>
<feature type="region of interest" description="Leucine repeat I (LRI)" evidence="3">
    <location>
        <begin position="289"/>
        <end position="353"/>
    </location>
</feature>
<feature type="region of interest" description="VHIID" evidence="3">
    <location>
        <begin position="372"/>
        <end position="437"/>
    </location>
</feature>
<feature type="region of interest" description="Leucine repeat II (LRII)" evidence="3">
    <location>
        <begin position="447"/>
        <end position="479"/>
    </location>
</feature>
<feature type="region of interest" description="PFYRE" evidence="3">
    <location>
        <begin position="488"/>
        <end position="575"/>
    </location>
</feature>
<feature type="region of interest" description="SAW" evidence="3">
    <location>
        <begin position="578"/>
        <end position="652"/>
    </location>
</feature>
<feature type="coiled-coil region" evidence="2">
    <location>
        <begin position="258"/>
        <end position="289"/>
    </location>
</feature>
<feature type="short sequence motif" description="LxCxE motif" evidence="3">
    <location>
        <begin position="296"/>
        <end position="300"/>
    </location>
</feature>
<feature type="short sequence motif" description="VHIID" evidence="3">
    <location>
        <begin position="403"/>
        <end position="407"/>
    </location>
</feature>
<feature type="compositionally biased region" description="Pro residues" evidence="4">
    <location>
        <begin position="190"/>
        <end position="228"/>
    </location>
</feature>
<feature type="compositionally biased region" description="Low complexity" evidence="4">
    <location>
        <begin position="258"/>
        <end position="271"/>
    </location>
</feature>
<feature type="compositionally biased region" description="Basic and acidic residues" evidence="4">
    <location>
        <begin position="272"/>
        <end position="285"/>
    </location>
</feature>
<reference key="1">
    <citation type="journal article" date="2005" name="PLoS Biol.">
        <title>The genomes of Oryza sativa: a history of duplications.</title>
        <authorList>
            <person name="Yu J."/>
            <person name="Wang J."/>
            <person name="Lin W."/>
            <person name="Li S."/>
            <person name="Li H."/>
            <person name="Zhou J."/>
            <person name="Ni P."/>
            <person name="Dong W."/>
            <person name="Hu S."/>
            <person name="Zeng C."/>
            <person name="Zhang J."/>
            <person name="Zhang Y."/>
            <person name="Li R."/>
            <person name="Xu Z."/>
            <person name="Li S."/>
            <person name="Li X."/>
            <person name="Zheng H."/>
            <person name="Cong L."/>
            <person name="Lin L."/>
            <person name="Yin J."/>
            <person name="Geng J."/>
            <person name="Li G."/>
            <person name="Shi J."/>
            <person name="Liu J."/>
            <person name="Lv H."/>
            <person name="Li J."/>
            <person name="Wang J."/>
            <person name="Deng Y."/>
            <person name="Ran L."/>
            <person name="Shi X."/>
            <person name="Wang X."/>
            <person name="Wu Q."/>
            <person name="Li C."/>
            <person name="Ren X."/>
            <person name="Wang J."/>
            <person name="Wang X."/>
            <person name="Li D."/>
            <person name="Liu D."/>
            <person name="Zhang X."/>
            <person name="Ji Z."/>
            <person name="Zhao W."/>
            <person name="Sun Y."/>
            <person name="Zhang Z."/>
            <person name="Bao J."/>
            <person name="Han Y."/>
            <person name="Dong L."/>
            <person name="Ji J."/>
            <person name="Chen P."/>
            <person name="Wu S."/>
            <person name="Liu J."/>
            <person name="Xiao Y."/>
            <person name="Bu D."/>
            <person name="Tan J."/>
            <person name="Yang L."/>
            <person name="Ye C."/>
            <person name="Zhang J."/>
            <person name="Xu J."/>
            <person name="Zhou Y."/>
            <person name="Yu Y."/>
            <person name="Zhang B."/>
            <person name="Zhuang S."/>
            <person name="Wei H."/>
            <person name="Liu B."/>
            <person name="Lei M."/>
            <person name="Yu H."/>
            <person name="Li Y."/>
            <person name="Xu H."/>
            <person name="Wei S."/>
            <person name="He X."/>
            <person name="Fang L."/>
            <person name="Zhang Z."/>
            <person name="Zhang Y."/>
            <person name="Huang X."/>
            <person name="Su Z."/>
            <person name="Tong W."/>
            <person name="Li J."/>
            <person name="Tong Z."/>
            <person name="Li S."/>
            <person name="Ye J."/>
            <person name="Wang L."/>
            <person name="Fang L."/>
            <person name="Lei T."/>
            <person name="Chen C.-S."/>
            <person name="Chen H.-C."/>
            <person name="Xu Z."/>
            <person name="Li H."/>
            <person name="Huang H."/>
            <person name="Zhang F."/>
            <person name="Xu H."/>
            <person name="Li N."/>
            <person name="Zhao C."/>
            <person name="Li S."/>
            <person name="Dong L."/>
            <person name="Huang Y."/>
            <person name="Li L."/>
            <person name="Xi Y."/>
            <person name="Qi Q."/>
            <person name="Li W."/>
            <person name="Zhang B."/>
            <person name="Hu W."/>
            <person name="Zhang Y."/>
            <person name="Tian X."/>
            <person name="Jiao Y."/>
            <person name="Liang X."/>
            <person name="Jin J."/>
            <person name="Gao L."/>
            <person name="Zheng W."/>
            <person name="Hao B."/>
            <person name="Liu S.-M."/>
            <person name="Wang W."/>
            <person name="Yuan L."/>
            <person name="Cao M."/>
            <person name="McDermott J."/>
            <person name="Samudrala R."/>
            <person name="Wang J."/>
            <person name="Wong G.K.-S."/>
            <person name="Yang H."/>
        </authorList>
    </citation>
    <scope>NUCLEOTIDE SEQUENCE [LARGE SCALE GENOMIC DNA]</scope>
    <source>
        <strain>cv. 93-11</strain>
    </source>
</reference>
<keyword id="KW-0175">Coiled coil</keyword>
<keyword id="KW-0217">Developmental protein</keyword>
<keyword id="KW-0539">Nucleus</keyword>
<keyword id="KW-1185">Reference proteome</keyword>
<keyword id="KW-0804">Transcription</keyword>
<keyword id="KW-0805">Transcription regulation</keyword>
<comment type="function">
    <text evidence="1">Transcription factor required for quiescent center cells specification and maintenance of surrounding stem cells, and for the asymmetric cell division involved in radial pattern formation in roots. Essential for cell division but not differentiation of the ground tissue. Regulates the radial organization of the shoot axial organs. Restricts SHR movment and sequesters it into the nucleus of the endodermis (By similarity).</text>
</comment>
<comment type="subunit">
    <text evidence="1">Interacts with SHR1, but not with SHR2.</text>
</comment>
<comment type="subcellular location">
    <subcellularLocation>
        <location evidence="1">Nucleus</location>
    </subcellularLocation>
</comment>
<comment type="similarity">
    <text evidence="5">Belongs to the GRAS family.</text>
</comment>
<comment type="sequence caution" evidence="5">
    <conflict type="erroneous initiation">
        <sequence resource="EMBL-CDS" id="EAY79759"/>
    </conflict>
</comment>
<gene>
    <name type="primary">SCR1</name>
    <name type="ORF">OsI_033718</name>
</gene>
<dbReference type="EMBL" id="CM000136">
    <property type="protein sequence ID" value="EAY79759.1"/>
    <property type="status" value="ALT_INIT"/>
    <property type="molecule type" value="Genomic_DNA"/>
</dbReference>
<dbReference type="SMR" id="A2ZAX5"/>
<dbReference type="STRING" id="39946.A2ZAX5"/>
<dbReference type="EnsemblPlants" id="OsGoSa_11g0001590.01">
    <property type="protein sequence ID" value="OsGoSa_11g0001590.01"/>
    <property type="gene ID" value="OsGoSa_11g0001590"/>
</dbReference>
<dbReference type="EnsemblPlants" id="OsIR64_11g0001560.01">
    <property type="protein sequence ID" value="OsIR64_11g0001560.01"/>
    <property type="gene ID" value="OsIR64_11g0001560"/>
</dbReference>
<dbReference type="EnsemblPlants" id="OsKYG_11g0001600.01">
    <property type="protein sequence ID" value="OsKYG_11g0001600.01"/>
    <property type="gene ID" value="OsKYG_11g0001600"/>
</dbReference>
<dbReference type="EnsemblPlants" id="OsLaMu_11g0001610.01">
    <property type="protein sequence ID" value="OsLaMu_11g0001610.01"/>
    <property type="gene ID" value="OsLaMu_11g0001610"/>
</dbReference>
<dbReference type="EnsemblPlants" id="OsLima_11g0001440.01">
    <property type="protein sequence ID" value="OsLima_11g0001440.01"/>
    <property type="gene ID" value="OsLima_11g0001440"/>
</dbReference>
<dbReference type="EnsemblPlants" id="OsLiXu_11g0001550.01">
    <property type="protein sequence ID" value="OsLiXu_11g0001550.01"/>
    <property type="gene ID" value="OsLiXu_11g0001550"/>
</dbReference>
<dbReference type="EnsemblPlants" id="OsPr106_11g0001570.01">
    <property type="protein sequence ID" value="OsPr106_11g0001570.01"/>
    <property type="gene ID" value="OsPr106_11g0001570"/>
</dbReference>
<dbReference type="EnsemblPlants" id="OsZS97_11G001570_01">
    <property type="protein sequence ID" value="OsZS97_11G001570_01"/>
    <property type="gene ID" value="OsZS97_11G001570"/>
</dbReference>
<dbReference type="Gramene" id="OsGoSa_11g0001590.01">
    <property type="protein sequence ID" value="OsGoSa_11g0001590.01"/>
    <property type="gene ID" value="OsGoSa_11g0001590"/>
</dbReference>
<dbReference type="Gramene" id="OsIR64_11g0001560.01">
    <property type="protein sequence ID" value="OsIR64_11g0001560.01"/>
    <property type="gene ID" value="OsIR64_11g0001560"/>
</dbReference>
<dbReference type="Gramene" id="OsKYG_11g0001600.01">
    <property type="protein sequence ID" value="OsKYG_11g0001600.01"/>
    <property type="gene ID" value="OsKYG_11g0001600"/>
</dbReference>
<dbReference type="Gramene" id="OsLaMu_11g0001610.01">
    <property type="protein sequence ID" value="OsLaMu_11g0001610.01"/>
    <property type="gene ID" value="OsLaMu_11g0001610"/>
</dbReference>
<dbReference type="Gramene" id="OsLima_11g0001440.01">
    <property type="protein sequence ID" value="OsLima_11g0001440.01"/>
    <property type="gene ID" value="OsLima_11g0001440"/>
</dbReference>
<dbReference type="Gramene" id="OsLiXu_11g0001550.01">
    <property type="protein sequence ID" value="OsLiXu_11g0001550.01"/>
    <property type="gene ID" value="OsLiXu_11g0001550"/>
</dbReference>
<dbReference type="Gramene" id="OsPr106_11g0001570.01">
    <property type="protein sequence ID" value="OsPr106_11g0001570.01"/>
    <property type="gene ID" value="OsPr106_11g0001570"/>
</dbReference>
<dbReference type="Gramene" id="OsZS97_11G001570_01">
    <property type="protein sequence ID" value="OsZS97_11G001570_01"/>
    <property type="gene ID" value="OsZS97_11G001570"/>
</dbReference>
<dbReference type="HOGENOM" id="CLU_011924_7_2_1"/>
<dbReference type="OrthoDB" id="757063at2759"/>
<dbReference type="Proteomes" id="UP000007015">
    <property type="component" value="Chromosome 11"/>
</dbReference>
<dbReference type="GO" id="GO:0005634">
    <property type="term" value="C:nucleus"/>
    <property type="evidence" value="ECO:0007669"/>
    <property type="project" value="UniProtKB-SubCell"/>
</dbReference>
<dbReference type="InterPro" id="IPR005202">
    <property type="entry name" value="TF_GRAS"/>
</dbReference>
<dbReference type="PANTHER" id="PTHR31636">
    <property type="entry name" value="OSJNBA0084A10.13 PROTEIN-RELATED"/>
    <property type="match status" value="1"/>
</dbReference>
<dbReference type="Pfam" id="PF03514">
    <property type="entry name" value="GRAS"/>
    <property type="match status" value="1"/>
</dbReference>
<dbReference type="PROSITE" id="PS50985">
    <property type="entry name" value="GRAS"/>
    <property type="match status" value="1"/>
</dbReference>